<sequence>MKLMELTPWETPAVIDYKKTMEQFGVKPIVDVLGDLKEEHHFFRRNIILGHRDFERIVDAIKNNKEFAVVSGMMPSGKMHFGHKMVVDLLKFYQKYTDNINIPIADLEAYWARNMSFETTKELALNEYITNYIALGLDPEKINVYLQSKYQKVKDLALILSKRTNWSEMKAIYGFKGETNIGHVFAPIVQVADILHPQLDENLSPEPKPVVVPVGIDQDPHIRLTRDIANRAKEFKFIPPSSTYHRFMTGLLGGKMSSSKPETAIFLTDDEKTVKKKIFSAKTGGRETLEEHKKYGGVPEECVVYELFLYHLILDDKELAEIYQKCRSGELTCGKCKKMAYERVVEFLKDLKEKREQAKEIAVKILEGKY</sequence>
<feature type="chain" id="PRO_0000136723" description="Tryptophan--tRNA ligase">
    <location>
        <begin position="1"/>
        <end position="370"/>
    </location>
</feature>
<feature type="short sequence motif" description="'HIGH' region">
    <location>
        <begin position="75"/>
        <end position="83"/>
    </location>
</feature>
<feature type="short sequence motif" description="'KMSKS' region">
    <location>
        <begin position="255"/>
        <end position="259"/>
    </location>
</feature>
<organism>
    <name type="scientific">Methanocaldococcus jannaschii (strain ATCC 43067 / DSM 2661 / JAL-1 / JCM 10045 / NBRC 100440)</name>
    <name type="common">Methanococcus jannaschii</name>
    <dbReference type="NCBI Taxonomy" id="243232"/>
    <lineage>
        <taxon>Archaea</taxon>
        <taxon>Methanobacteriati</taxon>
        <taxon>Methanobacteriota</taxon>
        <taxon>Methanomada group</taxon>
        <taxon>Methanococci</taxon>
        <taxon>Methanococcales</taxon>
        <taxon>Methanocaldococcaceae</taxon>
        <taxon>Methanocaldococcus</taxon>
    </lineage>
</organism>
<name>SYW_METJA</name>
<proteinExistence type="inferred from homology"/>
<evidence type="ECO:0000255" key="1">
    <source>
        <dbReference type="HAMAP-Rule" id="MF_00140"/>
    </source>
</evidence>
<comment type="catalytic activity">
    <reaction evidence="1">
        <text>tRNA(Trp) + L-tryptophan + ATP = L-tryptophyl-tRNA(Trp) + AMP + diphosphate + H(+)</text>
        <dbReference type="Rhea" id="RHEA:24080"/>
        <dbReference type="Rhea" id="RHEA-COMP:9671"/>
        <dbReference type="Rhea" id="RHEA-COMP:9705"/>
        <dbReference type="ChEBI" id="CHEBI:15378"/>
        <dbReference type="ChEBI" id="CHEBI:30616"/>
        <dbReference type="ChEBI" id="CHEBI:33019"/>
        <dbReference type="ChEBI" id="CHEBI:57912"/>
        <dbReference type="ChEBI" id="CHEBI:78442"/>
        <dbReference type="ChEBI" id="CHEBI:78535"/>
        <dbReference type="ChEBI" id="CHEBI:456215"/>
        <dbReference type="EC" id="6.1.1.2"/>
    </reaction>
</comment>
<comment type="subcellular location">
    <subcellularLocation>
        <location evidence="1">Cytoplasm</location>
    </subcellularLocation>
</comment>
<comment type="similarity">
    <text evidence="1">Belongs to the class-I aminoacyl-tRNA synthetase family.</text>
</comment>
<gene>
    <name evidence="1" type="primary">trpS</name>
    <name type="ordered locus">MJ1415</name>
</gene>
<reference key="1">
    <citation type="journal article" date="1996" name="Science">
        <title>Complete genome sequence of the methanogenic archaeon, Methanococcus jannaschii.</title>
        <authorList>
            <person name="Bult C.J."/>
            <person name="White O."/>
            <person name="Olsen G.J."/>
            <person name="Zhou L."/>
            <person name="Fleischmann R.D."/>
            <person name="Sutton G.G."/>
            <person name="Blake J.A."/>
            <person name="FitzGerald L.M."/>
            <person name="Clayton R.A."/>
            <person name="Gocayne J.D."/>
            <person name="Kerlavage A.R."/>
            <person name="Dougherty B.A."/>
            <person name="Tomb J.-F."/>
            <person name="Adams M.D."/>
            <person name="Reich C.I."/>
            <person name="Overbeek R."/>
            <person name="Kirkness E.F."/>
            <person name="Weinstock K.G."/>
            <person name="Merrick J.M."/>
            <person name="Glodek A."/>
            <person name="Scott J.L."/>
            <person name="Geoghagen N.S.M."/>
            <person name="Weidman J.F."/>
            <person name="Fuhrmann J.L."/>
            <person name="Nguyen D."/>
            <person name="Utterback T.R."/>
            <person name="Kelley J.M."/>
            <person name="Peterson J.D."/>
            <person name="Sadow P.W."/>
            <person name="Hanna M.C."/>
            <person name="Cotton M.D."/>
            <person name="Roberts K.M."/>
            <person name="Hurst M.A."/>
            <person name="Kaine B.P."/>
            <person name="Borodovsky M."/>
            <person name="Klenk H.-P."/>
            <person name="Fraser C.M."/>
            <person name="Smith H.O."/>
            <person name="Woese C.R."/>
            <person name="Venter J.C."/>
        </authorList>
    </citation>
    <scope>NUCLEOTIDE SEQUENCE [LARGE SCALE GENOMIC DNA]</scope>
    <source>
        <strain>ATCC 43067 / DSM 2661 / JAL-1 / JCM 10045 / NBRC 100440</strain>
    </source>
</reference>
<protein>
    <recommendedName>
        <fullName evidence="1">Tryptophan--tRNA ligase</fullName>
        <ecNumber evidence="1">6.1.1.2</ecNumber>
    </recommendedName>
    <alternativeName>
        <fullName evidence="1">Tryptophanyl-tRNA synthetase</fullName>
        <shortName evidence="1">TrpRS</shortName>
    </alternativeName>
</protein>
<accession>Q58810</accession>
<dbReference type="EC" id="6.1.1.2" evidence="1"/>
<dbReference type="EMBL" id="L77117">
    <property type="protein sequence ID" value="AAB99425.1"/>
    <property type="molecule type" value="Genomic_DNA"/>
</dbReference>
<dbReference type="PIR" id="F64476">
    <property type="entry name" value="F64476"/>
</dbReference>
<dbReference type="SMR" id="Q58810"/>
<dbReference type="FunCoup" id="Q58810">
    <property type="interactions" value="273"/>
</dbReference>
<dbReference type="STRING" id="243232.MJ_1415"/>
<dbReference type="PaxDb" id="243232-MJ_1415"/>
<dbReference type="EnsemblBacteria" id="AAB99425">
    <property type="protein sequence ID" value="AAB99425"/>
    <property type="gene ID" value="MJ_1415"/>
</dbReference>
<dbReference type="KEGG" id="mja:MJ_1415"/>
<dbReference type="eggNOG" id="arCOG01887">
    <property type="taxonomic scope" value="Archaea"/>
</dbReference>
<dbReference type="HOGENOM" id="CLU_032621_3_0_2"/>
<dbReference type="InParanoid" id="Q58810"/>
<dbReference type="PhylomeDB" id="Q58810"/>
<dbReference type="Proteomes" id="UP000000805">
    <property type="component" value="Chromosome"/>
</dbReference>
<dbReference type="GO" id="GO:0005737">
    <property type="term" value="C:cytoplasm"/>
    <property type="evidence" value="ECO:0000318"/>
    <property type="project" value="GO_Central"/>
</dbReference>
<dbReference type="GO" id="GO:0005524">
    <property type="term" value="F:ATP binding"/>
    <property type="evidence" value="ECO:0007669"/>
    <property type="project" value="UniProtKB-UniRule"/>
</dbReference>
<dbReference type="GO" id="GO:0004830">
    <property type="term" value="F:tryptophan-tRNA ligase activity"/>
    <property type="evidence" value="ECO:0000318"/>
    <property type="project" value="GO_Central"/>
</dbReference>
<dbReference type="GO" id="GO:0006436">
    <property type="term" value="P:tryptophanyl-tRNA aminoacylation"/>
    <property type="evidence" value="ECO:0000318"/>
    <property type="project" value="GO_Central"/>
</dbReference>
<dbReference type="CDD" id="cd00806">
    <property type="entry name" value="TrpRS_core"/>
    <property type="match status" value="1"/>
</dbReference>
<dbReference type="FunFam" id="1.10.240.10:FF:000007">
    <property type="entry name" value="Tryptophan--tRNA ligase"/>
    <property type="match status" value="1"/>
</dbReference>
<dbReference type="FunFam" id="3.40.50.620:FF:000207">
    <property type="entry name" value="Tryptophan--tRNA ligase"/>
    <property type="match status" value="1"/>
</dbReference>
<dbReference type="Gene3D" id="3.40.50.620">
    <property type="entry name" value="HUPs"/>
    <property type="match status" value="1"/>
</dbReference>
<dbReference type="Gene3D" id="1.10.240.10">
    <property type="entry name" value="Tyrosyl-Transfer RNA Synthetase"/>
    <property type="match status" value="1"/>
</dbReference>
<dbReference type="HAMAP" id="MF_00140_A">
    <property type="entry name" value="Trp_tRNA_synth_A"/>
    <property type="match status" value="1"/>
</dbReference>
<dbReference type="InterPro" id="IPR002305">
    <property type="entry name" value="aa-tRNA-synth_Ic"/>
</dbReference>
<dbReference type="InterPro" id="IPR014729">
    <property type="entry name" value="Rossmann-like_a/b/a_fold"/>
</dbReference>
<dbReference type="InterPro" id="IPR002306">
    <property type="entry name" value="Trp-tRNA-ligase"/>
</dbReference>
<dbReference type="InterPro" id="IPR020653">
    <property type="entry name" value="Tryptophan-tRNA-ligase_arc"/>
</dbReference>
<dbReference type="NCBIfam" id="NF008925">
    <property type="entry name" value="PRK12285.1-2"/>
    <property type="match status" value="1"/>
</dbReference>
<dbReference type="NCBIfam" id="TIGR00233">
    <property type="entry name" value="trpS"/>
    <property type="match status" value="1"/>
</dbReference>
<dbReference type="PANTHER" id="PTHR10055:SF5">
    <property type="entry name" value="TRYPTOPHAN--TRNA LIGASE"/>
    <property type="match status" value="1"/>
</dbReference>
<dbReference type="PANTHER" id="PTHR10055">
    <property type="entry name" value="TRYPTOPHANYL-TRNA SYNTHETASE"/>
    <property type="match status" value="1"/>
</dbReference>
<dbReference type="Pfam" id="PF00579">
    <property type="entry name" value="tRNA-synt_1b"/>
    <property type="match status" value="1"/>
</dbReference>
<dbReference type="PRINTS" id="PR01039">
    <property type="entry name" value="TRNASYNTHTRP"/>
</dbReference>
<dbReference type="SUPFAM" id="SSF52374">
    <property type="entry name" value="Nucleotidylyl transferase"/>
    <property type="match status" value="1"/>
</dbReference>
<keyword id="KW-0030">Aminoacyl-tRNA synthetase</keyword>
<keyword id="KW-0067">ATP-binding</keyword>
<keyword id="KW-0963">Cytoplasm</keyword>
<keyword id="KW-0436">Ligase</keyword>
<keyword id="KW-0547">Nucleotide-binding</keyword>
<keyword id="KW-0648">Protein biosynthesis</keyword>
<keyword id="KW-1185">Reference proteome</keyword>